<proteinExistence type="evidence at protein level"/>
<protein>
    <recommendedName>
        <fullName evidence="11">Nonsense-mediated mRNA decay factor SMG9</fullName>
    </recommendedName>
</protein>
<gene>
    <name evidence="11" type="primary">SMG9</name>
    <name evidence="11" type="synonym">C19orf61</name>
</gene>
<sequence length="520" mass="57651">MSESGHSQPGLYGIERRRRWKEPGSGGPQNLSGPGGRERDYIAPWERERRDASEETSTSVMQKTPIILSKPPAERSKQPPPPTAPAAPPAPAPLEKPIVLMKPREEGKGPVAVTGASTPEGTAPPPPAAPAPPKGEKEGQRPTQPVYQIQNRGMGTAAPAAMDPVVGQAKLLPPERMKHSIKLVDDQMNWCDSAIEYLLDQTDVLVVGVLGLQGTGKSMVMSLLSANTPEEDQRTYVFRAQSAEMKERGGNQTSGIDFFITQERIVFLDTQPILSPSILDHLINNDRKLPPEYNLPHTYVEMQSLQIAAFLFTVCHVVIVVQDWFTDLSLYRFLQTAEMVKPSTPSPSHESSSSSGSDEGTEYYPHLVFLQNKARREDFCPRKLRQMHLMIDQLMAHSHLRYKGTLSMLQCNVFPGLPPDFLDSEVNLFLVPFMDSEAESENPPRAGPGSSPLFSLLPGYRGHPSFQSLVSKLRSQVMSMARPQLSHTILTEKNWFHYAARIWDGVRKSSALAEYSRLLA</sequence>
<dbReference type="EMBL" id="AL136606">
    <property type="protein sequence ID" value="CAB66541.1"/>
    <property type="molecule type" value="mRNA"/>
</dbReference>
<dbReference type="EMBL" id="AK022948">
    <property type="protein sequence ID" value="BAB14323.1"/>
    <property type="molecule type" value="mRNA"/>
</dbReference>
<dbReference type="EMBL" id="AC004780">
    <property type="protein sequence ID" value="AAC17932.1"/>
    <property type="status" value="ALT_SEQ"/>
    <property type="molecule type" value="Genomic_DNA"/>
</dbReference>
<dbReference type="EMBL" id="BC008869">
    <property type="protein sequence ID" value="AAH08869.1"/>
    <property type="molecule type" value="mRNA"/>
</dbReference>
<dbReference type="CCDS" id="CCDS33043.2">
    <molecule id="Q9H0W8-1"/>
</dbReference>
<dbReference type="RefSeq" id="NP_061981.2">
    <molecule id="Q9H0W8-1"/>
    <property type="nucleotide sequence ID" value="NM_019108.4"/>
</dbReference>
<dbReference type="PDB" id="6L54">
    <property type="method" value="EM"/>
    <property type="resolution" value="3.43 A"/>
    <property type="chains" value="C=1-520"/>
</dbReference>
<dbReference type="PDB" id="6SYT">
    <property type="method" value="EM"/>
    <property type="resolution" value="3.45 A"/>
    <property type="chains" value="C=1-520"/>
</dbReference>
<dbReference type="PDB" id="6Z3R">
    <property type="method" value="EM"/>
    <property type="resolution" value="2.97 A"/>
    <property type="chains" value="C=1-520"/>
</dbReference>
<dbReference type="PDB" id="7PW4">
    <property type="method" value="EM"/>
    <property type="resolution" value="3.27 A"/>
    <property type="chains" value="C=1-520"/>
</dbReference>
<dbReference type="PDB" id="7PW5">
    <property type="method" value="EM"/>
    <property type="resolution" value="3.40 A"/>
    <property type="chains" value="C=1-520"/>
</dbReference>
<dbReference type="PDB" id="7PW7">
    <property type="method" value="EM"/>
    <property type="resolution" value="3.59 A"/>
    <property type="chains" value="C=1-520"/>
</dbReference>
<dbReference type="PDB" id="7PW8">
    <property type="method" value="EM"/>
    <property type="resolution" value="2.82 A"/>
    <property type="chains" value="C=1-520"/>
</dbReference>
<dbReference type="PDB" id="7PW9">
    <property type="method" value="EM"/>
    <property type="resolution" value="3.12 A"/>
    <property type="chains" value="C=169-520"/>
</dbReference>
<dbReference type="PDB" id="8FE7">
    <property type="method" value="X-ray"/>
    <property type="resolution" value="2.98 A"/>
    <property type="chains" value="B/D/F/H=140-151"/>
</dbReference>
<dbReference type="PDBsum" id="6L54"/>
<dbReference type="PDBsum" id="6SYT"/>
<dbReference type="PDBsum" id="6Z3R"/>
<dbReference type="PDBsum" id="7PW4"/>
<dbReference type="PDBsum" id="7PW5"/>
<dbReference type="PDBsum" id="7PW7"/>
<dbReference type="PDBsum" id="7PW8"/>
<dbReference type="PDBsum" id="7PW9"/>
<dbReference type="PDBsum" id="8FE7"/>
<dbReference type="EMDB" id="EMD-0837"/>
<dbReference type="EMDB" id="EMD-10347"/>
<dbReference type="EMDB" id="EMD-11063"/>
<dbReference type="EMDB" id="EMD-13674"/>
<dbReference type="EMDB" id="EMD-13675"/>
<dbReference type="EMDB" id="EMD-13677"/>
<dbReference type="EMDB" id="EMD-13678"/>
<dbReference type="EMDB" id="EMD-13679"/>
<dbReference type="EMDB" id="EMD-2663"/>
<dbReference type="EMDB" id="EMD-2664"/>
<dbReference type="EMDB" id="EMD-2665"/>
<dbReference type="EMDB" id="EMD-2666"/>
<dbReference type="EMDB" id="EMD-3065"/>
<dbReference type="EMDB" id="EMD-3066"/>
<dbReference type="EMDB" id="EMD-3278"/>
<dbReference type="SMR" id="Q9H0W8"/>
<dbReference type="BioGRID" id="121029">
    <property type="interactions" value="75"/>
</dbReference>
<dbReference type="ComplexPortal" id="CPX-2827">
    <property type="entry name" value="SMG1C protein kinase complex"/>
</dbReference>
<dbReference type="CORUM" id="Q9H0W8"/>
<dbReference type="FunCoup" id="Q9H0W8">
    <property type="interactions" value="1112"/>
</dbReference>
<dbReference type="IntAct" id="Q9H0W8">
    <property type="interactions" value="54"/>
</dbReference>
<dbReference type="STRING" id="9606.ENSP00000270066"/>
<dbReference type="GlyGen" id="Q9H0W8">
    <property type="glycosylation" value="2 sites, 1 O-linked glycan (1 site)"/>
</dbReference>
<dbReference type="iPTMnet" id="Q9H0W8"/>
<dbReference type="PhosphoSitePlus" id="Q9H0W8"/>
<dbReference type="BioMuta" id="SMG9"/>
<dbReference type="DMDM" id="74733529"/>
<dbReference type="jPOST" id="Q9H0W8"/>
<dbReference type="MassIVE" id="Q9H0W8"/>
<dbReference type="PaxDb" id="9606-ENSP00000270066"/>
<dbReference type="PeptideAtlas" id="Q9H0W8"/>
<dbReference type="ProteomicsDB" id="80333">
    <molecule id="Q9H0W8-1"/>
</dbReference>
<dbReference type="ProteomicsDB" id="80334">
    <molecule id="Q9H0W8-2"/>
</dbReference>
<dbReference type="Pumba" id="Q9H0W8"/>
<dbReference type="Antibodypedia" id="31101">
    <property type="antibodies" value="60 antibodies from 20 providers"/>
</dbReference>
<dbReference type="DNASU" id="56006"/>
<dbReference type="Ensembl" id="ENST00000270066.11">
    <molecule id="Q9H0W8-1"/>
    <property type="protein sequence ID" value="ENSP00000270066.6"/>
    <property type="gene ID" value="ENSG00000105771.14"/>
</dbReference>
<dbReference type="Ensembl" id="ENST00000601170.5">
    <molecule id="Q9H0W8-2"/>
    <property type="protein sequence ID" value="ENSP00000471398.1"/>
    <property type="gene ID" value="ENSG00000105771.14"/>
</dbReference>
<dbReference type="GeneID" id="56006"/>
<dbReference type="KEGG" id="hsa:56006"/>
<dbReference type="MANE-Select" id="ENST00000270066.11">
    <property type="protein sequence ID" value="ENSP00000270066.6"/>
    <property type="RefSeq nucleotide sequence ID" value="NM_019108.4"/>
    <property type="RefSeq protein sequence ID" value="NP_061981.2"/>
</dbReference>
<dbReference type="UCSC" id="uc002oxj.3">
    <molecule id="Q9H0W8-1"/>
    <property type="organism name" value="human"/>
</dbReference>
<dbReference type="AGR" id="HGNC:25763"/>
<dbReference type="CTD" id="56006"/>
<dbReference type="DisGeNET" id="56006"/>
<dbReference type="GeneCards" id="SMG9"/>
<dbReference type="HGNC" id="HGNC:25763">
    <property type="gene designation" value="SMG9"/>
</dbReference>
<dbReference type="HPA" id="ENSG00000105771">
    <property type="expression patterns" value="Low tissue specificity"/>
</dbReference>
<dbReference type="MalaCards" id="SMG9"/>
<dbReference type="MIM" id="613176">
    <property type="type" value="gene"/>
</dbReference>
<dbReference type="MIM" id="616920">
    <property type="type" value="phenotype"/>
</dbReference>
<dbReference type="MIM" id="619995">
    <property type="type" value="phenotype"/>
</dbReference>
<dbReference type="neXtProt" id="NX_Q9H0W8"/>
<dbReference type="OpenTargets" id="ENSG00000105771"/>
<dbReference type="PharmGKB" id="PA162378734"/>
<dbReference type="VEuPathDB" id="HostDB:ENSG00000105771"/>
<dbReference type="eggNOG" id="KOG4181">
    <property type="taxonomic scope" value="Eukaryota"/>
</dbReference>
<dbReference type="GeneTree" id="ENSGT00390000003568"/>
<dbReference type="HOGENOM" id="CLU_037795_0_0_1"/>
<dbReference type="InParanoid" id="Q9H0W8"/>
<dbReference type="OMA" id="SEYYPHL"/>
<dbReference type="OrthoDB" id="79514at2759"/>
<dbReference type="PAN-GO" id="Q9H0W8">
    <property type="GO annotations" value="1 GO annotation based on evolutionary models"/>
</dbReference>
<dbReference type="PhylomeDB" id="Q9H0W8"/>
<dbReference type="TreeFam" id="TF319763"/>
<dbReference type="PathwayCommons" id="Q9H0W8"/>
<dbReference type="Reactome" id="R-HSA-975957">
    <property type="pathway name" value="Nonsense Mediated Decay (NMD) enhanced by the Exon Junction Complex (EJC)"/>
</dbReference>
<dbReference type="SignaLink" id="Q9H0W8"/>
<dbReference type="BioGRID-ORCS" id="56006">
    <property type="hits" value="35 hits in 1161 CRISPR screens"/>
</dbReference>
<dbReference type="ChiTaRS" id="SMG9">
    <property type="organism name" value="human"/>
</dbReference>
<dbReference type="GenomeRNAi" id="56006"/>
<dbReference type="Pharos" id="Q9H0W8">
    <property type="development level" value="Tbio"/>
</dbReference>
<dbReference type="PRO" id="PR:Q9H0W8"/>
<dbReference type="Proteomes" id="UP000005640">
    <property type="component" value="Chromosome 19"/>
</dbReference>
<dbReference type="RNAct" id="Q9H0W8">
    <property type="molecule type" value="protein"/>
</dbReference>
<dbReference type="Bgee" id="ENSG00000105771">
    <property type="expression patterns" value="Expressed in left testis and 162 other cell types or tissues"/>
</dbReference>
<dbReference type="ExpressionAtlas" id="Q9H0W8">
    <property type="expression patterns" value="baseline and differential"/>
</dbReference>
<dbReference type="GO" id="GO:0005829">
    <property type="term" value="C:cytosol"/>
    <property type="evidence" value="ECO:0000304"/>
    <property type="project" value="Reactome"/>
</dbReference>
<dbReference type="GO" id="GO:0042802">
    <property type="term" value="F:identical protein binding"/>
    <property type="evidence" value="ECO:0000353"/>
    <property type="project" value="IntAct"/>
</dbReference>
<dbReference type="GO" id="GO:0007420">
    <property type="term" value="P:brain development"/>
    <property type="evidence" value="ECO:0000250"/>
    <property type="project" value="UniProtKB"/>
</dbReference>
<dbReference type="GO" id="GO:0001654">
    <property type="term" value="P:eye development"/>
    <property type="evidence" value="ECO:0000250"/>
    <property type="project" value="UniProtKB"/>
</dbReference>
<dbReference type="GO" id="GO:0007507">
    <property type="term" value="P:heart development"/>
    <property type="evidence" value="ECO:0000250"/>
    <property type="project" value="UniProtKB"/>
</dbReference>
<dbReference type="GO" id="GO:0001701">
    <property type="term" value="P:in utero embryonic development"/>
    <property type="evidence" value="ECO:0007669"/>
    <property type="project" value="Ensembl"/>
</dbReference>
<dbReference type="GO" id="GO:0043066">
    <property type="term" value="P:negative regulation of apoptotic process"/>
    <property type="evidence" value="ECO:0000269"/>
    <property type="project" value="DisProt"/>
</dbReference>
<dbReference type="GO" id="GO:0000184">
    <property type="term" value="P:nuclear-transcribed mRNA catabolic process, nonsense-mediated decay"/>
    <property type="evidence" value="ECO:0000315"/>
    <property type="project" value="UniProtKB"/>
</dbReference>
<dbReference type="FunFam" id="3.40.50.300:FF:001272">
    <property type="entry name" value="SMG9 isoform 2"/>
    <property type="match status" value="1"/>
</dbReference>
<dbReference type="Gene3D" id="3.40.50.300">
    <property type="entry name" value="P-loop containing nucleotide triphosphate hydrolases"/>
    <property type="match status" value="1"/>
</dbReference>
<dbReference type="InterPro" id="IPR027417">
    <property type="entry name" value="P-loop_NTPase"/>
</dbReference>
<dbReference type="InterPro" id="IPR039177">
    <property type="entry name" value="SMG9"/>
</dbReference>
<dbReference type="PANTHER" id="PTHR14270">
    <property type="entry name" value="NONSENSE-MEDIATED MRNA DECAY FACTOR SMG9"/>
    <property type="match status" value="1"/>
</dbReference>
<dbReference type="PANTHER" id="PTHR14270:SF0">
    <property type="entry name" value="NONSENSE-MEDIATED MRNA DECAY FACTOR SMG9"/>
    <property type="match status" value="1"/>
</dbReference>
<feature type="initiator methionine" description="Removed" evidence="15 16">
    <location>
        <position position="1"/>
    </location>
</feature>
<feature type="chain" id="PRO_0000289163" description="Nonsense-mediated mRNA decay factor SMG9">
    <location>
        <begin position="2"/>
        <end position="520"/>
    </location>
</feature>
<feature type="region of interest" description="Disordered" evidence="2">
    <location>
        <begin position="1"/>
        <end position="94"/>
    </location>
</feature>
<feature type="region of interest" description="Disordered" evidence="2">
    <location>
        <begin position="108"/>
        <end position="143"/>
    </location>
</feature>
<feature type="region of interest" description="Disordered" evidence="2">
    <location>
        <begin position="341"/>
        <end position="360"/>
    </location>
</feature>
<feature type="compositionally biased region" description="Basic and acidic residues" evidence="2">
    <location>
        <begin position="36"/>
        <end position="53"/>
    </location>
</feature>
<feature type="compositionally biased region" description="Pro residues" evidence="2">
    <location>
        <begin position="78"/>
        <end position="94"/>
    </location>
</feature>
<feature type="compositionally biased region" description="Pro residues" evidence="2">
    <location>
        <begin position="122"/>
        <end position="133"/>
    </location>
</feature>
<feature type="compositionally biased region" description="Low complexity" evidence="2">
    <location>
        <begin position="342"/>
        <end position="357"/>
    </location>
</feature>
<feature type="modified residue" description="N-acetylserine" evidence="15 16">
    <location>
        <position position="2"/>
    </location>
</feature>
<feature type="modified residue" description="Phosphoserine" evidence="17">
    <location>
        <position position="2"/>
    </location>
</feature>
<feature type="modified residue" description="Phosphoserine" evidence="17">
    <location>
        <position position="4"/>
    </location>
</feature>
<feature type="modified residue" description="Phosphoserine" evidence="13 15 16 17">
    <location>
        <position position="7"/>
    </location>
</feature>
<feature type="modified residue" description="Phosphoserine" evidence="12 15 16 17 18">
    <location>
        <position position="32"/>
    </location>
</feature>
<feature type="modified residue" description="Phosphoserine" evidence="12 14 17">
    <location>
        <position position="53"/>
    </location>
</feature>
<feature type="modified residue" description="Phosphoserine" evidence="12">
    <location>
        <position position="451"/>
    </location>
</feature>
<feature type="splice variant" id="VSP_025946" description="In isoform 2." evidence="9">
    <location>
        <begin position="496"/>
        <end position="520"/>
    </location>
</feature>
<feature type="sequence variant" id="VAR_087655" description="In NEDITPO; uncertain significance; dbSNP:rs749498958." evidence="8">
    <original>V</original>
    <variation>A</variation>
    <location>
        <position position="184"/>
    </location>
</feature>
<feature type="strand" evidence="21">
    <location>
        <begin position="181"/>
        <end position="184"/>
    </location>
</feature>
<feature type="helix" evidence="21">
    <location>
        <begin position="195"/>
        <end position="197"/>
    </location>
</feature>
<feature type="strand" evidence="21">
    <location>
        <begin position="205"/>
        <end position="211"/>
    </location>
</feature>
<feature type="strand" evidence="20">
    <location>
        <begin position="213"/>
        <end position="215"/>
    </location>
</feature>
<feature type="helix" evidence="21">
    <location>
        <begin position="217"/>
        <end position="225"/>
    </location>
</feature>
<feature type="strand" evidence="19">
    <location>
        <begin position="229"/>
        <end position="231"/>
    </location>
</feature>
<feature type="helix" evidence="21">
    <location>
        <begin position="233"/>
        <end position="235"/>
    </location>
</feature>
<feature type="strand" evidence="19">
    <location>
        <begin position="236"/>
        <end position="238"/>
    </location>
</feature>
<feature type="helix" evidence="21">
    <location>
        <begin position="243"/>
        <end position="247"/>
    </location>
</feature>
<feature type="strand" evidence="21">
    <location>
        <begin position="255"/>
        <end position="260"/>
    </location>
</feature>
<feature type="strand" evidence="21">
    <location>
        <begin position="265"/>
        <end position="270"/>
    </location>
</feature>
<feature type="helix" evidence="21">
    <location>
        <begin position="276"/>
        <end position="283"/>
    </location>
</feature>
<feature type="helix" evidence="21">
    <location>
        <begin position="296"/>
        <end position="314"/>
    </location>
</feature>
<feature type="strand" evidence="21">
    <location>
        <begin position="316"/>
        <end position="325"/>
    </location>
</feature>
<feature type="helix" evidence="21">
    <location>
        <begin position="330"/>
        <end position="339"/>
    </location>
</feature>
<feature type="strand" evidence="21">
    <location>
        <begin position="366"/>
        <end position="374"/>
    </location>
</feature>
<feature type="helix" evidence="21">
    <location>
        <begin position="376"/>
        <end position="379"/>
    </location>
</feature>
<feature type="helix" evidence="21">
    <location>
        <begin position="381"/>
        <end position="394"/>
    </location>
</feature>
<feature type="turn" evidence="21">
    <location>
        <begin position="395"/>
        <end position="397"/>
    </location>
</feature>
<feature type="strand" evidence="21">
    <location>
        <begin position="403"/>
        <end position="405"/>
    </location>
</feature>
<feature type="turn" evidence="21">
    <location>
        <begin position="408"/>
        <end position="412"/>
    </location>
</feature>
<feature type="strand" evidence="22">
    <location>
        <begin position="413"/>
        <end position="416"/>
    </location>
</feature>
<feature type="helix" evidence="21">
    <location>
        <begin position="419"/>
        <end position="421"/>
    </location>
</feature>
<feature type="strand" evidence="20">
    <location>
        <begin position="422"/>
        <end position="424"/>
    </location>
</feature>
<feature type="strand" evidence="21">
    <location>
        <begin position="426"/>
        <end position="432"/>
    </location>
</feature>
<feature type="helix" evidence="21">
    <location>
        <begin position="454"/>
        <end position="456"/>
    </location>
</feature>
<feature type="helix" evidence="21">
    <location>
        <begin position="466"/>
        <end position="478"/>
    </location>
</feature>
<feature type="strand" evidence="21">
    <location>
        <begin position="485"/>
        <end position="488"/>
    </location>
</feature>
<feature type="helix" evidence="21">
    <location>
        <begin position="492"/>
        <end position="507"/>
    </location>
</feature>
<feature type="helix" evidence="21">
    <location>
        <begin position="511"/>
        <end position="517"/>
    </location>
</feature>
<name>SMG9_HUMAN</name>
<reference key="1">
    <citation type="journal article" date="2001" name="Genome Res.">
        <title>Towards a catalog of human genes and proteins: sequencing and analysis of 500 novel complete protein coding human cDNAs.</title>
        <authorList>
            <person name="Wiemann S."/>
            <person name="Weil B."/>
            <person name="Wellenreuther R."/>
            <person name="Gassenhuber J."/>
            <person name="Glassl S."/>
            <person name="Ansorge W."/>
            <person name="Boecher M."/>
            <person name="Bloecker H."/>
            <person name="Bauersachs S."/>
            <person name="Blum H."/>
            <person name="Lauber J."/>
            <person name="Duesterhoeft A."/>
            <person name="Beyer A."/>
            <person name="Koehrer K."/>
            <person name="Strack N."/>
            <person name="Mewes H.-W."/>
            <person name="Ottenwaelder B."/>
            <person name="Obermaier B."/>
            <person name="Tampe J."/>
            <person name="Heubner D."/>
            <person name="Wambutt R."/>
            <person name="Korn B."/>
            <person name="Klein M."/>
            <person name="Poustka A."/>
        </authorList>
    </citation>
    <scope>NUCLEOTIDE SEQUENCE [LARGE SCALE MRNA] (ISOFORM 1)</scope>
    <source>
        <tissue>Brain</tissue>
    </source>
</reference>
<reference key="2">
    <citation type="journal article" date="2004" name="Nat. Genet.">
        <title>Complete sequencing and characterization of 21,243 full-length human cDNAs.</title>
        <authorList>
            <person name="Ota T."/>
            <person name="Suzuki Y."/>
            <person name="Nishikawa T."/>
            <person name="Otsuki T."/>
            <person name="Sugiyama T."/>
            <person name="Irie R."/>
            <person name="Wakamatsu A."/>
            <person name="Hayashi K."/>
            <person name="Sato H."/>
            <person name="Nagai K."/>
            <person name="Kimura K."/>
            <person name="Makita H."/>
            <person name="Sekine M."/>
            <person name="Obayashi M."/>
            <person name="Nishi T."/>
            <person name="Shibahara T."/>
            <person name="Tanaka T."/>
            <person name="Ishii S."/>
            <person name="Yamamoto J."/>
            <person name="Saito K."/>
            <person name="Kawai Y."/>
            <person name="Isono Y."/>
            <person name="Nakamura Y."/>
            <person name="Nagahari K."/>
            <person name="Murakami K."/>
            <person name="Yasuda T."/>
            <person name="Iwayanagi T."/>
            <person name="Wagatsuma M."/>
            <person name="Shiratori A."/>
            <person name="Sudo H."/>
            <person name="Hosoiri T."/>
            <person name="Kaku Y."/>
            <person name="Kodaira H."/>
            <person name="Kondo H."/>
            <person name="Sugawara M."/>
            <person name="Takahashi M."/>
            <person name="Kanda K."/>
            <person name="Yokoi T."/>
            <person name="Furuya T."/>
            <person name="Kikkawa E."/>
            <person name="Omura Y."/>
            <person name="Abe K."/>
            <person name="Kamihara K."/>
            <person name="Katsuta N."/>
            <person name="Sato K."/>
            <person name="Tanikawa M."/>
            <person name="Yamazaki M."/>
            <person name="Ninomiya K."/>
            <person name="Ishibashi T."/>
            <person name="Yamashita H."/>
            <person name="Murakawa K."/>
            <person name="Fujimori K."/>
            <person name="Tanai H."/>
            <person name="Kimata M."/>
            <person name="Watanabe M."/>
            <person name="Hiraoka S."/>
            <person name="Chiba Y."/>
            <person name="Ishida S."/>
            <person name="Ono Y."/>
            <person name="Takiguchi S."/>
            <person name="Watanabe S."/>
            <person name="Yosida M."/>
            <person name="Hotuta T."/>
            <person name="Kusano J."/>
            <person name="Kanehori K."/>
            <person name="Takahashi-Fujii A."/>
            <person name="Hara H."/>
            <person name="Tanase T.-O."/>
            <person name="Nomura Y."/>
            <person name="Togiya S."/>
            <person name="Komai F."/>
            <person name="Hara R."/>
            <person name="Takeuchi K."/>
            <person name="Arita M."/>
            <person name="Imose N."/>
            <person name="Musashino K."/>
            <person name="Yuuki H."/>
            <person name="Oshima A."/>
            <person name="Sasaki N."/>
            <person name="Aotsuka S."/>
            <person name="Yoshikawa Y."/>
            <person name="Matsunawa H."/>
            <person name="Ichihara T."/>
            <person name="Shiohata N."/>
            <person name="Sano S."/>
            <person name="Moriya S."/>
            <person name="Momiyama H."/>
            <person name="Satoh N."/>
            <person name="Takami S."/>
            <person name="Terashima Y."/>
            <person name="Suzuki O."/>
            <person name="Nakagawa S."/>
            <person name="Senoh A."/>
            <person name="Mizoguchi H."/>
            <person name="Goto Y."/>
            <person name="Shimizu F."/>
            <person name="Wakebe H."/>
            <person name="Hishigaki H."/>
            <person name="Watanabe T."/>
            <person name="Sugiyama A."/>
            <person name="Takemoto M."/>
            <person name="Kawakami B."/>
            <person name="Yamazaki M."/>
            <person name="Watanabe K."/>
            <person name="Kumagai A."/>
            <person name="Itakura S."/>
            <person name="Fukuzumi Y."/>
            <person name="Fujimori Y."/>
            <person name="Komiyama M."/>
            <person name="Tashiro H."/>
            <person name="Tanigami A."/>
            <person name="Fujiwara T."/>
            <person name="Ono T."/>
            <person name="Yamada K."/>
            <person name="Fujii Y."/>
            <person name="Ozaki K."/>
            <person name="Hirao M."/>
            <person name="Ohmori Y."/>
            <person name="Kawabata A."/>
            <person name="Hikiji T."/>
            <person name="Kobatake N."/>
            <person name="Inagaki H."/>
            <person name="Ikema Y."/>
            <person name="Okamoto S."/>
            <person name="Okitani R."/>
            <person name="Kawakami T."/>
            <person name="Noguchi S."/>
            <person name="Itoh T."/>
            <person name="Shigeta K."/>
            <person name="Senba T."/>
            <person name="Matsumura K."/>
            <person name="Nakajima Y."/>
            <person name="Mizuno T."/>
            <person name="Morinaga M."/>
            <person name="Sasaki M."/>
            <person name="Togashi T."/>
            <person name="Oyama M."/>
            <person name="Hata H."/>
            <person name="Watanabe M."/>
            <person name="Komatsu T."/>
            <person name="Mizushima-Sugano J."/>
            <person name="Satoh T."/>
            <person name="Shirai Y."/>
            <person name="Takahashi Y."/>
            <person name="Nakagawa K."/>
            <person name="Okumura K."/>
            <person name="Nagase T."/>
            <person name="Nomura N."/>
            <person name="Kikuchi H."/>
            <person name="Masuho Y."/>
            <person name="Yamashita R."/>
            <person name="Nakai K."/>
            <person name="Yada T."/>
            <person name="Nakamura Y."/>
            <person name="Ohara O."/>
            <person name="Isogai T."/>
            <person name="Sugano S."/>
        </authorList>
    </citation>
    <scope>NUCLEOTIDE SEQUENCE [LARGE SCALE MRNA] (ISOFORM 2)</scope>
    <source>
        <tissue>Teratocarcinoma</tissue>
    </source>
</reference>
<reference key="3">
    <citation type="journal article" date="2004" name="Nature">
        <title>The DNA sequence and biology of human chromosome 19.</title>
        <authorList>
            <person name="Grimwood J."/>
            <person name="Gordon L.A."/>
            <person name="Olsen A.S."/>
            <person name="Terry A."/>
            <person name="Schmutz J."/>
            <person name="Lamerdin J.E."/>
            <person name="Hellsten U."/>
            <person name="Goodstein D."/>
            <person name="Couronne O."/>
            <person name="Tran-Gyamfi M."/>
            <person name="Aerts A."/>
            <person name="Altherr M."/>
            <person name="Ashworth L."/>
            <person name="Bajorek E."/>
            <person name="Black S."/>
            <person name="Branscomb E."/>
            <person name="Caenepeel S."/>
            <person name="Carrano A.V."/>
            <person name="Caoile C."/>
            <person name="Chan Y.M."/>
            <person name="Christensen M."/>
            <person name="Cleland C.A."/>
            <person name="Copeland A."/>
            <person name="Dalin E."/>
            <person name="Dehal P."/>
            <person name="Denys M."/>
            <person name="Detter J.C."/>
            <person name="Escobar J."/>
            <person name="Flowers D."/>
            <person name="Fotopulos D."/>
            <person name="Garcia C."/>
            <person name="Georgescu A.M."/>
            <person name="Glavina T."/>
            <person name="Gomez M."/>
            <person name="Gonzales E."/>
            <person name="Groza M."/>
            <person name="Hammon N."/>
            <person name="Hawkins T."/>
            <person name="Haydu L."/>
            <person name="Ho I."/>
            <person name="Huang W."/>
            <person name="Israni S."/>
            <person name="Jett J."/>
            <person name="Kadner K."/>
            <person name="Kimball H."/>
            <person name="Kobayashi A."/>
            <person name="Larionov V."/>
            <person name="Leem S.-H."/>
            <person name="Lopez F."/>
            <person name="Lou Y."/>
            <person name="Lowry S."/>
            <person name="Malfatti S."/>
            <person name="Martinez D."/>
            <person name="McCready P.M."/>
            <person name="Medina C."/>
            <person name="Morgan J."/>
            <person name="Nelson K."/>
            <person name="Nolan M."/>
            <person name="Ovcharenko I."/>
            <person name="Pitluck S."/>
            <person name="Pollard M."/>
            <person name="Popkie A.P."/>
            <person name="Predki P."/>
            <person name="Quan G."/>
            <person name="Ramirez L."/>
            <person name="Rash S."/>
            <person name="Retterer J."/>
            <person name="Rodriguez A."/>
            <person name="Rogers S."/>
            <person name="Salamov A."/>
            <person name="Salazar A."/>
            <person name="She X."/>
            <person name="Smith D."/>
            <person name="Slezak T."/>
            <person name="Solovyev V."/>
            <person name="Thayer N."/>
            <person name="Tice H."/>
            <person name="Tsai M."/>
            <person name="Ustaszewska A."/>
            <person name="Vo N."/>
            <person name="Wagner M."/>
            <person name="Wheeler J."/>
            <person name="Wu K."/>
            <person name="Xie G."/>
            <person name="Yang J."/>
            <person name="Dubchak I."/>
            <person name="Furey T.S."/>
            <person name="DeJong P."/>
            <person name="Dickson M."/>
            <person name="Gordon D."/>
            <person name="Eichler E.E."/>
            <person name="Pennacchio L.A."/>
            <person name="Richardson P."/>
            <person name="Stubbs L."/>
            <person name="Rokhsar D.S."/>
            <person name="Myers R.M."/>
            <person name="Rubin E.M."/>
            <person name="Lucas S.M."/>
        </authorList>
    </citation>
    <scope>NUCLEOTIDE SEQUENCE [LARGE SCALE GENOMIC DNA]</scope>
</reference>
<reference key="4">
    <citation type="journal article" date="2004" name="Genome Res.">
        <title>The status, quality, and expansion of the NIH full-length cDNA project: the Mammalian Gene Collection (MGC).</title>
        <authorList>
            <consortium name="The MGC Project Team"/>
        </authorList>
    </citation>
    <scope>NUCLEOTIDE SEQUENCE [LARGE SCALE MRNA] (ISOFORM 1)</scope>
    <source>
        <tissue>Muscle</tissue>
    </source>
</reference>
<reference key="5">
    <citation type="journal article" date="2008" name="Mol. Cell">
        <title>Kinase-selective enrichment enables quantitative phosphoproteomics of the kinome across the cell cycle.</title>
        <authorList>
            <person name="Daub H."/>
            <person name="Olsen J.V."/>
            <person name="Bairlein M."/>
            <person name="Gnad F."/>
            <person name="Oppermann F.S."/>
            <person name="Korner R."/>
            <person name="Greff Z."/>
            <person name="Keri G."/>
            <person name="Stemmann O."/>
            <person name="Mann M."/>
        </authorList>
    </citation>
    <scope>PHOSPHORYLATION [LARGE SCALE ANALYSIS] AT SER-7</scope>
    <scope>IDENTIFICATION BY MASS SPECTROMETRY [LARGE SCALE ANALYSIS]</scope>
    <source>
        <tissue>Cervix carcinoma</tissue>
    </source>
</reference>
<reference key="6">
    <citation type="journal article" date="2008" name="Proc. Natl. Acad. Sci. U.S.A.">
        <title>A quantitative atlas of mitotic phosphorylation.</title>
        <authorList>
            <person name="Dephoure N."/>
            <person name="Zhou C."/>
            <person name="Villen J."/>
            <person name="Beausoleil S.A."/>
            <person name="Bakalarski C.E."/>
            <person name="Elledge S.J."/>
            <person name="Gygi S.P."/>
        </authorList>
    </citation>
    <scope>PHOSPHORYLATION [LARGE SCALE ANALYSIS] AT SER-32; SER-53 AND SER-451</scope>
    <scope>IDENTIFICATION BY MASS SPECTROMETRY [LARGE SCALE ANALYSIS]</scope>
    <source>
        <tissue>Cervix carcinoma</tissue>
    </source>
</reference>
<reference key="7">
    <citation type="journal article" date="2009" name="Anal. Chem.">
        <title>Lys-N and trypsin cover complementary parts of the phosphoproteome in a refined SCX-based approach.</title>
        <authorList>
            <person name="Gauci S."/>
            <person name="Helbig A.O."/>
            <person name="Slijper M."/>
            <person name="Krijgsveld J."/>
            <person name="Heck A.J."/>
            <person name="Mohammed S."/>
        </authorList>
    </citation>
    <scope>IDENTIFICATION BY MASS SPECTROMETRY [LARGE SCALE ANALYSIS]</scope>
</reference>
<reference key="8">
    <citation type="journal article" date="2009" name="Genes Dev.">
        <title>SMG-8 and SMG-9, two novel subunits of the SMG-1 complex, regulate remodeling of the mRNA surveillance complex during nonsense-mediated mRNA decay.</title>
        <authorList>
            <person name="Yamashita A."/>
            <person name="Izumi N."/>
            <person name="Kashima I."/>
            <person name="Ohnishi T."/>
            <person name="Saari B."/>
            <person name="Katsuhata Y."/>
            <person name="Muramatsu R."/>
            <person name="Morita T."/>
            <person name="Iwamatsu A."/>
            <person name="Hachiya T."/>
            <person name="Kurata R."/>
            <person name="Hirano H."/>
            <person name="Anderson P."/>
            <person name="Ohno S."/>
        </authorList>
    </citation>
    <scope>FUNCTION</scope>
    <scope>PHOSPHORYLATION</scope>
    <scope>IDENTIFICATION BY MASS SPECTROMETRY</scope>
    <scope>IDENTIFICATION IN THE SMG1C COMPLEX</scope>
</reference>
<reference key="9">
    <citation type="journal article" date="2009" name="Sci. Signal.">
        <title>Quantitative phosphoproteomic analysis of T cell receptor signaling reveals system-wide modulation of protein-protein interactions.</title>
        <authorList>
            <person name="Mayya V."/>
            <person name="Lundgren D.H."/>
            <person name="Hwang S.-I."/>
            <person name="Rezaul K."/>
            <person name="Wu L."/>
            <person name="Eng J.K."/>
            <person name="Rodionov V."/>
            <person name="Han D.K."/>
        </authorList>
    </citation>
    <scope>PHOSPHORYLATION [LARGE SCALE ANALYSIS] AT SER-53</scope>
    <scope>IDENTIFICATION BY MASS SPECTROMETRY [LARGE SCALE ANALYSIS]</scope>
    <source>
        <tissue>Leukemic T-cell</tissue>
    </source>
</reference>
<reference key="10">
    <citation type="journal article" date="2010" name="Sci. Signal.">
        <title>Quantitative phosphoproteomics reveals widespread full phosphorylation site occupancy during mitosis.</title>
        <authorList>
            <person name="Olsen J.V."/>
            <person name="Vermeulen M."/>
            <person name="Santamaria A."/>
            <person name="Kumar C."/>
            <person name="Miller M.L."/>
            <person name="Jensen L.J."/>
            <person name="Gnad F."/>
            <person name="Cox J."/>
            <person name="Jensen T.S."/>
            <person name="Nigg E.A."/>
            <person name="Brunak S."/>
            <person name="Mann M."/>
        </authorList>
    </citation>
    <scope>ACETYLATION [LARGE SCALE ANALYSIS] AT SER-2</scope>
    <scope>PHOSPHORYLATION [LARGE SCALE ANALYSIS] AT SER-7 AND SER-32</scope>
    <scope>CLEAVAGE OF INITIATOR METHIONINE [LARGE SCALE ANALYSIS]</scope>
    <scope>IDENTIFICATION BY MASS SPECTROMETRY [LARGE SCALE ANALYSIS]</scope>
    <source>
        <tissue>Cervix carcinoma</tissue>
    </source>
</reference>
<reference key="11">
    <citation type="journal article" date="2011" name="BMC Syst. Biol.">
        <title>Initial characterization of the human central proteome.</title>
        <authorList>
            <person name="Burkard T.R."/>
            <person name="Planyavsky M."/>
            <person name="Kaupe I."/>
            <person name="Breitwieser F.P."/>
            <person name="Buerckstuemmer T."/>
            <person name="Bennett K.L."/>
            <person name="Superti-Furga G."/>
            <person name="Colinge J."/>
        </authorList>
    </citation>
    <scope>IDENTIFICATION BY MASS SPECTROMETRY [LARGE SCALE ANALYSIS]</scope>
</reference>
<reference key="12">
    <citation type="journal article" date="2011" name="Genes Dev.">
        <title>The nonsense-mediated mRNA decay SMG-1 kinase is regulated by large-scale conformational changes controlled by SMG-8.</title>
        <authorList>
            <person name="Arias-Palomo E."/>
            <person name="Yamashita A."/>
            <person name="Fernandez I.S."/>
            <person name="Nunez-Ramirez R."/>
            <person name="Bamba Y."/>
            <person name="Izumi N."/>
            <person name="Ohno S."/>
            <person name="Llorca O."/>
        </authorList>
    </citation>
    <scope>INTERACTION WITH SMG1 AND SMG8</scope>
    <scope>ELECTRON MICROSCOPY OF THE SMG1C COMPLEX</scope>
</reference>
<reference key="13">
    <citation type="journal article" date="2011" name="Nucleic Acids Res.">
        <title>Characterization of SMG-9, an essential component of the nonsense-mediated mRNA decay SMG1C complex.</title>
        <authorList>
            <person name="Fernandez I.S."/>
            <person name="Yamashita A."/>
            <person name="Arias-Palomo E."/>
            <person name="Bamba Y."/>
            <person name="Bartolome R.A."/>
            <person name="Canales M.A."/>
            <person name="Teixido J."/>
            <person name="Ohno S."/>
            <person name="Llorca O."/>
        </authorList>
    </citation>
    <scope>SUBUNIT</scope>
</reference>
<reference key="14">
    <citation type="journal article" date="2011" name="Sci. Signal.">
        <title>System-wide temporal characterization of the proteome and phosphoproteome of human embryonic stem cell differentiation.</title>
        <authorList>
            <person name="Rigbolt K.T."/>
            <person name="Prokhorova T.A."/>
            <person name="Akimov V."/>
            <person name="Henningsen J."/>
            <person name="Johansen P.T."/>
            <person name="Kratchmarova I."/>
            <person name="Kassem M."/>
            <person name="Mann M."/>
            <person name="Olsen J.V."/>
            <person name="Blagoev B."/>
        </authorList>
    </citation>
    <scope>ACETYLATION [LARGE SCALE ANALYSIS] AT SER-2</scope>
    <scope>PHOSPHORYLATION [LARGE SCALE ANALYSIS] AT SER-7 AND SER-32</scope>
    <scope>CLEAVAGE OF INITIATOR METHIONINE [LARGE SCALE ANALYSIS]</scope>
    <scope>IDENTIFICATION BY MASS SPECTROMETRY [LARGE SCALE ANALYSIS]</scope>
</reference>
<reference key="15">
    <citation type="journal article" date="2013" name="J. Proteome Res.">
        <title>Toward a comprehensive characterization of a human cancer cell phosphoproteome.</title>
        <authorList>
            <person name="Zhou H."/>
            <person name="Di Palma S."/>
            <person name="Preisinger C."/>
            <person name="Peng M."/>
            <person name="Polat A.N."/>
            <person name="Heck A.J."/>
            <person name="Mohammed S."/>
        </authorList>
    </citation>
    <scope>PHOSPHORYLATION [LARGE SCALE ANALYSIS] AT SER-2; SER-4; SER-7; SER-32 AND SER-53</scope>
    <scope>IDENTIFICATION BY MASS SPECTROMETRY [LARGE SCALE ANALYSIS]</scope>
    <source>
        <tissue>Cervix carcinoma</tissue>
        <tissue>Erythroleukemia</tissue>
    </source>
</reference>
<reference key="16">
    <citation type="journal article" date="2014" name="Cell Rep.">
        <title>The RNA helicase DHX34 activates NMD by promoting a transition from the surveillance to the decay-inducing complex.</title>
        <authorList>
            <person name="Hug N."/>
            <person name="Caceres J.F."/>
        </authorList>
    </citation>
    <scope>INTERACTION WITH DHX34</scope>
</reference>
<reference key="17">
    <citation type="journal article" date="2014" name="J. Proteomics">
        <title>An enzyme assisted RP-RPLC approach for in-depth analysis of human liver phosphoproteome.</title>
        <authorList>
            <person name="Bian Y."/>
            <person name="Song C."/>
            <person name="Cheng K."/>
            <person name="Dong M."/>
            <person name="Wang F."/>
            <person name="Huang J."/>
            <person name="Sun D."/>
            <person name="Wang L."/>
            <person name="Ye M."/>
            <person name="Zou H."/>
        </authorList>
    </citation>
    <scope>PHOSPHORYLATION [LARGE SCALE ANALYSIS] AT SER-32</scope>
    <scope>IDENTIFICATION BY MASS SPECTROMETRY [LARGE SCALE ANALYSIS]</scope>
    <source>
        <tissue>Liver</tissue>
    </source>
</reference>
<reference key="18">
    <citation type="journal article" date="2016" name="Am. J. Hum. Genet.">
        <title>Mutations in SMG9, Encoding an Essential Component of Nonsense-Mediated Decay Machinery, Cause a multiple congenital anomaly syndrome in humans and mice.</title>
        <authorList>
            <person name="Shaheen R."/>
            <person name="Anazi S."/>
            <person name="Ben-Omran T."/>
            <person name="Seidahmed M.Z."/>
            <person name="Caddle L.B."/>
            <person name="Palmer K."/>
            <person name="Ali R."/>
            <person name="Alshidi T."/>
            <person name="Hagos S."/>
            <person name="Goodwin L."/>
            <person name="Hashem M."/>
            <person name="Wakil S.M."/>
            <person name="Abouelhoda M."/>
            <person name="Colak D."/>
            <person name="Murray S.A."/>
            <person name="Alkuraya F.S."/>
        </authorList>
    </citation>
    <scope>INVOLVEMENT IN HBMS</scope>
</reference>
<reference key="19">
    <citation type="journal article" date="2020" name="Elife">
        <title>Regulation of RUVBL1-RUVBL2 AAA-ATPases by the nonsense-mediated mRNA decay factor DHX34, as evidenced by Cryo-EM.</title>
        <authorList>
            <person name="Lopez-Perrote A."/>
            <person name="Hug N."/>
            <person name="Gonzalez-Corpas A."/>
            <person name="Rodriguez C.F."/>
            <person name="Serna M."/>
            <person name="Garcia-Martin C."/>
            <person name="Boskovic J."/>
            <person name="Fernandez-Leiro R."/>
            <person name="Caceres J.F."/>
            <person name="Llorca O."/>
        </authorList>
    </citation>
    <scope>INTERACTION WITH SMG1</scope>
</reference>
<reference key="20">
    <citation type="journal article" date="2022" name="Eur. J. Hum. Genet.">
        <title>A novel variant in SMG9 causes intellectual disability, confirming a role for nonsense-mediated decay components in neurocognitive development.</title>
        <authorList>
            <person name="Rahikkala E."/>
            <person name="Urpa L."/>
            <person name="Ghimire B."/>
            <person name="Topa H."/>
            <person name="Kurki M.I."/>
            <person name="Koskela M."/>
            <person name="Airavaara M."/>
            <person name="Haemaelaeinen E."/>
            <person name="Pylkaes K."/>
            <person name="Koerkkoe J."/>
            <person name="Savolainen H."/>
            <person name="Suoranta A."/>
            <person name="Bertoli-Avella A."/>
            <person name="Rolfs A."/>
            <person name="Mattila P."/>
            <person name="Daly M."/>
            <person name="Palotie A."/>
            <person name="Pietilaeinen O."/>
            <person name="Moilanen J."/>
            <person name="Kuismin O."/>
        </authorList>
    </citation>
    <scope>VARIANT NEDITPO ALA-184</scope>
    <scope>INVOLVEMENT IN NEDITPO</scope>
</reference>
<organism>
    <name type="scientific">Homo sapiens</name>
    <name type="common">Human</name>
    <dbReference type="NCBI Taxonomy" id="9606"/>
    <lineage>
        <taxon>Eukaryota</taxon>
        <taxon>Metazoa</taxon>
        <taxon>Chordata</taxon>
        <taxon>Craniata</taxon>
        <taxon>Vertebrata</taxon>
        <taxon>Euteleostomi</taxon>
        <taxon>Mammalia</taxon>
        <taxon>Eutheria</taxon>
        <taxon>Euarchontoglires</taxon>
        <taxon>Primates</taxon>
        <taxon>Haplorrhini</taxon>
        <taxon>Catarrhini</taxon>
        <taxon>Hominidae</taxon>
        <taxon>Homo</taxon>
    </lineage>
</organism>
<keyword id="KW-0002">3D-structure</keyword>
<keyword id="KW-0007">Acetylation</keyword>
<keyword id="KW-0025">Alternative splicing</keyword>
<keyword id="KW-0991">Intellectual disability</keyword>
<keyword id="KW-0866">Nonsense-mediated mRNA decay</keyword>
<keyword id="KW-0597">Phosphoprotein</keyword>
<keyword id="KW-1267">Proteomics identification</keyword>
<keyword id="KW-1185">Reference proteome</keyword>
<evidence type="ECO:0000250" key="1">
    <source>
        <dbReference type="UniProtKB" id="Q9DB90"/>
    </source>
</evidence>
<evidence type="ECO:0000256" key="2">
    <source>
        <dbReference type="SAM" id="MobiDB-lite"/>
    </source>
</evidence>
<evidence type="ECO:0000269" key="3">
    <source>
    </source>
</evidence>
<evidence type="ECO:0000269" key="4">
    <source>
    </source>
</evidence>
<evidence type="ECO:0000269" key="5">
    <source>
    </source>
</evidence>
<evidence type="ECO:0000269" key="6">
    <source>
    </source>
</evidence>
<evidence type="ECO:0000269" key="7">
    <source>
    </source>
</evidence>
<evidence type="ECO:0000269" key="8">
    <source>
    </source>
</evidence>
<evidence type="ECO:0000303" key="9">
    <source>
    </source>
</evidence>
<evidence type="ECO:0000305" key="10"/>
<evidence type="ECO:0000312" key="11">
    <source>
        <dbReference type="HGNC" id="HGNC:25763"/>
    </source>
</evidence>
<evidence type="ECO:0007744" key="12">
    <source>
    </source>
</evidence>
<evidence type="ECO:0007744" key="13">
    <source>
    </source>
</evidence>
<evidence type="ECO:0007744" key="14">
    <source>
    </source>
</evidence>
<evidence type="ECO:0007744" key="15">
    <source>
    </source>
</evidence>
<evidence type="ECO:0007744" key="16">
    <source>
    </source>
</evidence>
<evidence type="ECO:0007744" key="17">
    <source>
    </source>
</evidence>
<evidence type="ECO:0007744" key="18">
    <source>
    </source>
</evidence>
<evidence type="ECO:0007829" key="19">
    <source>
        <dbReference type="PDB" id="6L54"/>
    </source>
</evidence>
<evidence type="ECO:0007829" key="20">
    <source>
        <dbReference type="PDB" id="7PW4"/>
    </source>
</evidence>
<evidence type="ECO:0007829" key="21">
    <source>
        <dbReference type="PDB" id="7PW8"/>
    </source>
</evidence>
<evidence type="ECO:0007829" key="22">
    <source>
        <dbReference type="PDB" id="7PW9"/>
    </source>
</evidence>
<accession>Q9H0W8</accession>
<accession>O60429</accession>
<accession>Q9H9A9</accession>
<comment type="function">
    <text evidence="1 3">Involved in nonsense-mediated decay (NMD) of mRNAs containing premature stop codons (PubMed:19417104). Is recruited by release factors to stalled ribosomes together with SMG1 and SMG8 (forming the SMG1C protein kinase complex) and, in the SMG1C complex, is required for the efficient association between SMG1 and SMG8 (PubMed:19417104). Plays a role in brain, heart, and eye development (By similarity).</text>
</comment>
<comment type="subunit">
    <text evidence="3 4 5 7">Self-associates to form homodimers and forms heterodimers with SMG8; these assembly forms may represent SMG1C intermediate forms (PubMed:20817927). Component of the SMG1C complex composed of SMG1, SMG8 and SMG9 (PubMed:33205750). Interacts with DHX34; the interaction is RNA-independent (PubMed:25220460).</text>
</comment>
<comment type="interaction">
    <interactant intactId="EBI-2872322">
        <id>Q9H0W8</id>
    </interactant>
    <interactant intactId="EBI-11522760">
        <id>Q6RW13-2</id>
        <label>AGTRAP</label>
    </interactant>
    <organismsDiffer>false</organismsDiffer>
    <experiments>3</experiments>
</comment>
<comment type="interaction">
    <interactant intactId="EBI-2872322">
        <id>Q9H0W8</id>
    </interactant>
    <interactant intactId="EBI-8466265">
        <id>Q96MA6</id>
        <label>AK8</label>
    </interactant>
    <organismsDiffer>false</organismsDiffer>
    <experiments>3</experiments>
</comment>
<comment type="interaction">
    <interactant intactId="EBI-2872322">
        <id>Q9H0W8</id>
    </interactant>
    <interactant intactId="EBI-638194">
        <id>P53365</id>
        <label>ARFIP2</label>
    </interactant>
    <organismsDiffer>false</organismsDiffer>
    <experiments>3</experiments>
</comment>
<comment type="interaction">
    <interactant intactId="EBI-2872322">
        <id>Q9H0W8</id>
    </interactant>
    <interactant intactId="EBI-10961624">
        <id>Q2TAC2-2</id>
        <label>CCDC57</label>
    </interactant>
    <organismsDiffer>false</organismsDiffer>
    <experiments>3</experiments>
</comment>
<comment type="interaction">
    <interactant intactId="EBI-2872322">
        <id>Q9H0W8</id>
    </interactant>
    <interactant intactId="EBI-742887">
        <id>Q8TAP6</id>
        <label>CEP76</label>
    </interactant>
    <organismsDiffer>false</organismsDiffer>
    <experiments>3</experiments>
</comment>
<comment type="interaction">
    <interactant intactId="EBI-2872322">
        <id>Q9H0W8</id>
    </interactant>
    <interactant intactId="EBI-17278014">
        <id>Q8IZR5-2</id>
        <label>CMTM4</label>
    </interactant>
    <organismsDiffer>false</organismsDiffer>
    <experiments>3</experiments>
</comment>
<comment type="interaction">
    <interactant intactId="EBI-2872322">
        <id>Q9H0W8</id>
    </interactant>
    <interactant intactId="EBI-1188472">
        <id>P78358</id>
        <label>CTAG1B</label>
    </interactant>
    <organismsDiffer>false</organismsDiffer>
    <experiments>5</experiments>
</comment>
<comment type="interaction">
    <interactant intactId="EBI-2872322">
        <id>Q9H0W8</id>
    </interactant>
    <interactant intactId="EBI-12831978">
        <id>Q6ZPD8</id>
        <label>DGAT2L6</label>
    </interactant>
    <organismsDiffer>false</organismsDiffer>
    <experiments>3</experiments>
</comment>
<comment type="interaction">
    <interactant intactId="EBI-2872322">
        <id>Q9H0W8</id>
    </interactant>
    <interactant intactId="EBI-602349">
        <id>P49356</id>
        <label>FNTB</label>
    </interactant>
    <organismsDiffer>false</organismsDiffer>
    <experiments>3</experiments>
</comment>
<comment type="interaction">
    <interactant intactId="EBI-2872322">
        <id>Q9H0W8</id>
    </interactant>
    <interactant intactId="EBI-618309">
        <id>Q08379</id>
        <label>GOLGA2</label>
    </interactant>
    <organismsDiffer>false</organismsDiffer>
    <experiments>3</experiments>
</comment>
<comment type="interaction">
    <interactant intactId="EBI-2872322">
        <id>Q9H0W8</id>
    </interactant>
    <interactant intactId="EBI-12951679">
        <id>Q2KHT4-3</id>
        <label>GSG1</label>
    </interactant>
    <organismsDiffer>false</organismsDiffer>
    <experiments>3</experiments>
</comment>
<comment type="interaction">
    <interactant intactId="EBI-2872322">
        <id>Q9H0W8</id>
    </interactant>
    <interactant intactId="EBI-7116203">
        <id>O75031</id>
        <label>HSF2BP</label>
    </interactant>
    <organismsDiffer>false</organismsDiffer>
    <experiments>3</experiments>
</comment>
<comment type="interaction">
    <interactant intactId="EBI-2872322">
        <id>Q9H0W8</id>
    </interactant>
    <interactant intactId="EBI-6509505">
        <id>Q0VD86</id>
        <label>INCA1</label>
    </interactant>
    <organismsDiffer>false</organismsDiffer>
    <experiments>3</experiments>
</comment>
<comment type="interaction">
    <interactant intactId="EBI-2872322">
        <id>Q9H0W8</id>
    </interactant>
    <interactant intactId="EBI-948001">
        <id>Q15323</id>
        <label>KRT31</label>
    </interactant>
    <organismsDiffer>false</organismsDiffer>
    <experiments>6</experiments>
</comment>
<comment type="interaction">
    <interactant intactId="EBI-2872322">
        <id>Q9H0W8</id>
    </interactant>
    <interactant intactId="EBI-1047093">
        <id>O76011</id>
        <label>KRT34</label>
    </interactant>
    <organismsDiffer>false</organismsDiffer>
    <experiments>5</experiments>
</comment>
<comment type="interaction">
    <interactant intactId="EBI-2872322">
        <id>Q9H0W8</id>
    </interactant>
    <interactant intactId="EBI-10171774">
        <id>P60410</id>
        <label>KRTAP10-8</label>
    </interactant>
    <organismsDiffer>false</organismsDiffer>
    <experiments>3</experiments>
</comment>
<comment type="interaction">
    <interactant intactId="EBI-2872322">
        <id>Q9H0W8</id>
    </interactant>
    <interactant intactId="EBI-11522433">
        <id>Q5JR59-3</id>
        <label>MTUS2</label>
    </interactant>
    <organismsDiffer>false</organismsDiffer>
    <experiments>3</experiments>
</comment>
<comment type="interaction">
    <interactant intactId="EBI-2872322">
        <id>Q9H0W8</id>
    </interactant>
    <interactant intactId="EBI-10271199">
        <id>Q8NI38</id>
        <label>NFKBID</label>
    </interactant>
    <organismsDiffer>false</organismsDiffer>
    <experiments>3</experiments>
</comment>
<comment type="interaction">
    <interactant intactId="EBI-2872322">
        <id>Q9H0W8</id>
    </interactant>
    <interactant intactId="EBI-357275">
        <id>Q99471</id>
        <label>PFDN5</label>
    </interactant>
    <organismsDiffer>false</organismsDiffer>
    <experiments>3</experiments>
</comment>
<comment type="interaction">
    <interactant intactId="EBI-2872322">
        <id>Q9H0W8</id>
    </interactant>
    <interactant intactId="EBI-530034">
        <id>O43189</id>
        <label>PHF1</label>
    </interactant>
    <organismsDiffer>false</organismsDiffer>
    <experiments>3</experiments>
</comment>
<comment type="interaction">
    <interactant intactId="EBI-2872322">
        <id>Q9H0W8</id>
    </interactant>
    <interactant intactId="EBI-949255">
        <id>Q58EX7</id>
        <label>PLEKHG4</label>
    </interactant>
    <organismsDiffer>false</organismsDiffer>
    <experiments>3</experiments>
</comment>
<comment type="interaction">
    <interactant intactId="EBI-2872322">
        <id>Q9H0W8</id>
    </interactant>
    <interactant intactId="EBI-11278955">
        <id>Q9UL41</id>
        <label>PNMA3</label>
    </interactant>
    <organismsDiffer>false</organismsDiffer>
    <experiments>3</experiments>
</comment>
<comment type="interaction">
    <interactant intactId="EBI-2872322">
        <id>Q9H0W8</id>
    </interactant>
    <interactant intactId="EBI-2561661">
        <id>Q969Q6</id>
        <label>PPP2R3C</label>
    </interactant>
    <organismsDiffer>false</organismsDiffer>
    <experiments>3</experiments>
</comment>
<comment type="interaction">
    <interactant intactId="EBI-2872322">
        <id>Q9H0W8</id>
    </interactant>
    <interactant intactId="EBI-2805516">
        <id>P31321</id>
        <label>PRKAR1B</label>
    </interactant>
    <organismsDiffer>false</organismsDiffer>
    <experiments>3</experiments>
</comment>
<comment type="interaction">
    <interactant intactId="EBI-2872322">
        <id>Q9H0W8</id>
    </interactant>
    <interactant intactId="EBI-6912267">
        <id>A6NK89</id>
        <label>RASSF10</label>
    </interactant>
    <organismsDiffer>false</organismsDiffer>
    <experiments>3</experiments>
</comment>
<comment type="interaction">
    <interactant intactId="EBI-2872322">
        <id>Q9H0W8</id>
    </interactant>
    <interactant intactId="EBI-10829018">
        <id>Q04864-2</id>
        <label>REL</label>
    </interactant>
    <organismsDiffer>false</organismsDiffer>
    <experiments>3</experiments>
</comment>
<comment type="interaction">
    <interactant intactId="EBI-2872322">
        <id>Q9H0W8</id>
    </interactant>
    <interactant intactId="EBI-3940816">
        <id>Q9BYT1</id>
        <label>SLC17A9</label>
    </interactant>
    <organismsDiffer>false</organismsDiffer>
    <experiments>3</experiments>
</comment>
<comment type="interaction">
    <interactant intactId="EBI-2872322">
        <id>Q9H0W8</id>
    </interactant>
    <interactant intactId="EBI-8634123">
        <id>Q9BRV3</id>
        <label>SLC50A1</label>
    </interactant>
    <organismsDiffer>false</organismsDiffer>
    <experiments>3</experiments>
</comment>
<comment type="interaction">
    <interactant intactId="EBI-2872322">
        <id>Q9H0W8</id>
    </interactant>
    <interactant intactId="EBI-3903643">
        <id>Q8ND04</id>
        <label>SMG8</label>
    </interactant>
    <organismsDiffer>false</organismsDiffer>
    <experiments>6</experiments>
</comment>
<comment type="interaction">
    <interactant intactId="EBI-2872322">
        <id>Q9H0W8</id>
    </interactant>
    <interactant intactId="EBI-2872322">
        <id>Q9H0W8</id>
        <label>SMG9</label>
    </interactant>
    <organismsDiffer>false</organismsDiffer>
    <experiments>5</experiments>
</comment>
<comment type="interaction">
    <interactant intactId="EBI-2872322">
        <id>Q9H0W8</id>
    </interactant>
    <interactant intactId="EBI-9071725">
        <id>P08247</id>
        <label>SYP</label>
    </interactant>
    <organismsDiffer>false</organismsDiffer>
    <experiments>3</experiments>
</comment>
<comment type="interaction">
    <interactant intactId="EBI-2872322">
        <id>Q9H0W8</id>
    </interactant>
    <interactant intactId="EBI-13636688">
        <id>P15884-3</id>
        <label>TCF4</label>
    </interactant>
    <organismsDiffer>false</organismsDiffer>
    <experiments>3</experiments>
</comment>
<comment type="interaction">
    <interactant intactId="EBI-2872322">
        <id>Q9H0W8</id>
    </interactant>
    <interactant intactId="EBI-355744">
        <id>Q12933</id>
        <label>TRAF2</label>
    </interactant>
    <organismsDiffer>false</organismsDiffer>
    <experiments>6</experiments>
</comment>
<comment type="interaction">
    <interactant intactId="EBI-2872322">
        <id>Q9H0W8</id>
    </interactant>
    <interactant intactId="EBI-740098">
        <id>P36406</id>
        <label>TRIM23</label>
    </interactant>
    <organismsDiffer>false</organismsDiffer>
    <experiments>6</experiments>
</comment>
<comment type="interaction">
    <interactant intactId="EBI-2872322">
        <id>Q9H0W8</id>
    </interactant>
    <interactant intactId="EBI-719493">
        <id>P14373</id>
        <label>TRIM27</label>
    </interactant>
    <organismsDiffer>false</organismsDiffer>
    <experiments>3</experiments>
</comment>
<comment type="interaction">
    <interactant intactId="EBI-2872322">
        <id>Q9H0W8</id>
    </interactant>
    <interactant intactId="EBI-742327">
        <id>Q15654</id>
        <label>TRIP6</label>
    </interactant>
    <organismsDiffer>false</organismsDiffer>
    <experiments>3</experiments>
</comment>
<comment type="interaction">
    <interactant intactId="EBI-2872322">
        <id>Q9H0W8</id>
    </interactant>
    <interactant intactId="EBI-12806590">
        <id>Q86WV8</id>
        <label>TSC1</label>
    </interactant>
    <organismsDiffer>false</organismsDiffer>
    <experiments>3</experiments>
</comment>
<comment type="interaction">
    <interactant intactId="EBI-2872322">
        <id>Q9H0W8</id>
    </interactant>
    <interactant intactId="EBI-948354">
        <id>Q6DKK2</id>
        <label>TTC19</label>
    </interactant>
    <organismsDiffer>false</organismsDiffer>
    <experiments>3</experiments>
</comment>
<comment type="interaction">
    <interactant intactId="EBI-2872322">
        <id>Q9H0W8</id>
    </interactant>
    <interactant intactId="EBI-12030590">
        <id>Q9H0C1</id>
        <label>ZMYND12</label>
    </interactant>
    <organismsDiffer>false</organismsDiffer>
    <experiments>3</experiments>
</comment>
<comment type="interaction">
    <interactant intactId="EBI-2872322">
        <id>Q9H0W8</id>
    </interactant>
    <interactant intactId="EBI-625509">
        <id>Q8N720</id>
        <label>ZNF655</label>
    </interactant>
    <organismsDiffer>false</organismsDiffer>
    <experiments>3</experiments>
</comment>
<comment type="alternative products">
    <event type="alternative splicing"/>
    <isoform>
        <id>Q9H0W8-1</id>
        <name>1</name>
        <sequence type="displayed"/>
    </isoform>
    <isoform>
        <id>Q9H0W8-2</id>
        <name>2</name>
        <sequence type="described" ref="VSP_025946"/>
    </isoform>
</comment>
<comment type="PTM">
    <text evidence="3">Phosphorylated by SMG1.</text>
</comment>
<comment type="disease" evidence="6">
    <disease id="DI-04734">
        <name>Heart and brain malformation syndrome</name>
        <acronym>HBMS</acronym>
        <description>An autosomal recessive syndrome characterized by multiple congenital anomalies such as cardiac defects, brain malformations, including cerebellar vermis hypoplasia, hypoplastic corpus callosum and Dandy-Walker malformation, profoundly delayed psychomotor development, microphthalmia, and facial dysmorphism.</description>
        <dbReference type="MIM" id="616920"/>
    </disease>
    <text>The disease is caused by variants affecting the gene represented in this entry.</text>
</comment>
<comment type="disease" evidence="8">
    <disease id="DI-06480">
        <name>Neurodevelopmental disorder with intention tremor, pyramidal signs, dyspraxia, and ocular anomalies</name>
        <acronym>NEDITPO</acronym>
        <description>An autosomal recessive disorder characterized by characterized by mild to moderate intellectual disability, dysmorphic facial features, intention tremor, dyspraxia, and vertical strabismus.</description>
        <dbReference type="MIM" id="619995"/>
    </disease>
    <text>The disease may be caused by variants affecting the gene represented in this entry.</text>
</comment>
<comment type="similarity">
    <text evidence="10">Belongs to the SMG9 family.</text>
</comment>
<comment type="sequence caution" evidence="10">
    <conflict type="erroneous gene model prediction">
        <sequence resource="EMBL-CDS" id="AAC17932"/>
    </conflict>
</comment>